<sequence>MTPQAALQRVIEHREIFHDEMVSLMRQIMSGEVTPVMIAAIITGLRVKKETIGEIAAAASVMRELATPVKVPYDRHFVDIVGTGGDAAHTFNISSTAAFVVAAAGGKVAKHGGRSVSSSSGAADVLEALGANIMLSPEQVAACIDETGFGFMFAPNHHTAMKHVAPVRREMGVRTIFNILGPLTNPAGAPNTLMGVFHPDLVGILVRVMQRLGAERVLVVHGKDCLDEISLGAATMVGELNNGEIREYEIHPEDYGLQMQSLRNLRVGSAAESREMLLGVLGNQPGPAREIVCLNAGAALYVANVADSIGDGIVRAREAIASGAARAKLDQFINATKKFA</sequence>
<dbReference type="EC" id="2.4.2.18" evidence="1"/>
<dbReference type="EMBL" id="CP000089">
    <property type="protein sequence ID" value="AAZ48205.1"/>
    <property type="molecule type" value="Genomic_DNA"/>
</dbReference>
<dbReference type="SMR" id="Q47AC6"/>
<dbReference type="STRING" id="159087.Daro_3476"/>
<dbReference type="KEGG" id="dar:Daro_3476"/>
<dbReference type="eggNOG" id="COG0547">
    <property type="taxonomic scope" value="Bacteria"/>
</dbReference>
<dbReference type="HOGENOM" id="CLU_034315_2_1_4"/>
<dbReference type="OrthoDB" id="9806430at2"/>
<dbReference type="UniPathway" id="UPA00035">
    <property type="reaction ID" value="UER00041"/>
</dbReference>
<dbReference type="GO" id="GO:0005829">
    <property type="term" value="C:cytosol"/>
    <property type="evidence" value="ECO:0007669"/>
    <property type="project" value="TreeGrafter"/>
</dbReference>
<dbReference type="GO" id="GO:0004048">
    <property type="term" value="F:anthranilate phosphoribosyltransferase activity"/>
    <property type="evidence" value="ECO:0007669"/>
    <property type="project" value="UniProtKB-UniRule"/>
</dbReference>
<dbReference type="GO" id="GO:0000287">
    <property type="term" value="F:magnesium ion binding"/>
    <property type="evidence" value="ECO:0007669"/>
    <property type="project" value="UniProtKB-UniRule"/>
</dbReference>
<dbReference type="GO" id="GO:0000162">
    <property type="term" value="P:L-tryptophan biosynthetic process"/>
    <property type="evidence" value="ECO:0007669"/>
    <property type="project" value="UniProtKB-UniRule"/>
</dbReference>
<dbReference type="FunFam" id="1.20.970.10:FF:000006">
    <property type="entry name" value="Anthranilate phosphoribosyltransferase"/>
    <property type="match status" value="1"/>
</dbReference>
<dbReference type="FunFam" id="3.40.1030.10:FF:000002">
    <property type="entry name" value="Anthranilate phosphoribosyltransferase"/>
    <property type="match status" value="1"/>
</dbReference>
<dbReference type="Gene3D" id="3.40.1030.10">
    <property type="entry name" value="Nucleoside phosphorylase/phosphoribosyltransferase catalytic domain"/>
    <property type="match status" value="1"/>
</dbReference>
<dbReference type="Gene3D" id="1.20.970.10">
    <property type="entry name" value="Transferase, Pyrimidine Nucleoside Phosphorylase, Chain C"/>
    <property type="match status" value="1"/>
</dbReference>
<dbReference type="HAMAP" id="MF_00211">
    <property type="entry name" value="TrpD"/>
    <property type="match status" value="1"/>
</dbReference>
<dbReference type="InterPro" id="IPR005940">
    <property type="entry name" value="Anthranilate_Pribosyl_Tfrase"/>
</dbReference>
<dbReference type="InterPro" id="IPR000312">
    <property type="entry name" value="Glycosyl_Trfase_fam3"/>
</dbReference>
<dbReference type="InterPro" id="IPR017459">
    <property type="entry name" value="Glycosyl_Trfase_fam3_N_dom"/>
</dbReference>
<dbReference type="InterPro" id="IPR036320">
    <property type="entry name" value="Glycosyl_Trfase_fam3_N_dom_sf"/>
</dbReference>
<dbReference type="InterPro" id="IPR035902">
    <property type="entry name" value="Nuc_phospho_transferase"/>
</dbReference>
<dbReference type="NCBIfam" id="TIGR01245">
    <property type="entry name" value="trpD"/>
    <property type="match status" value="1"/>
</dbReference>
<dbReference type="PANTHER" id="PTHR43285">
    <property type="entry name" value="ANTHRANILATE PHOSPHORIBOSYLTRANSFERASE"/>
    <property type="match status" value="1"/>
</dbReference>
<dbReference type="PANTHER" id="PTHR43285:SF2">
    <property type="entry name" value="ANTHRANILATE PHOSPHORIBOSYLTRANSFERASE"/>
    <property type="match status" value="1"/>
</dbReference>
<dbReference type="Pfam" id="PF02885">
    <property type="entry name" value="Glycos_trans_3N"/>
    <property type="match status" value="1"/>
</dbReference>
<dbReference type="Pfam" id="PF00591">
    <property type="entry name" value="Glycos_transf_3"/>
    <property type="match status" value="1"/>
</dbReference>
<dbReference type="SUPFAM" id="SSF52418">
    <property type="entry name" value="Nucleoside phosphorylase/phosphoribosyltransferase catalytic domain"/>
    <property type="match status" value="1"/>
</dbReference>
<dbReference type="SUPFAM" id="SSF47648">
    <property type="entry name" value="Nucleoside phosphorylase/phosphoribosyltransferase N-terminal domain"/>
    <property type="match status" value="1"/>
</dbReference>
<evidence type="ECO:0000255" key="1">
    <source>
        <dbReference type="HAMAP-Rule" id="MF_00211"/>
    </source>
</evidence>
<protein>
    <recommendedName>
        <fullName evidence="1">Anthranilate phosphoribosyltransferase</fullName>
        <ecNumber evidence="1">2.4.2.18</ecNumber>
    </recommendedName>
</protein>
<comment type="function">
    <text evidence="1">Catalyzes the transfer of the phosphoribosyl group of 5-phosphorylribose-1-pyrophosphate (PRPP) to anthranilate to yield N-(5'-phosphoribosyl)-anthranilate (PRA).</text>
</comment>
<comment type="catalytic activity">
    <reaction evidence="1">
        <text>N-(5-phospho-beta-D-ribosyl)anthranilate + diphosphate = 5-phospho-alpha-D-ribose 1-diphosphate + anthranilate</text>
        <dbReference type="Rhea" id="RHEA:11768"/>
        <dbReference type="ChEBI" id="CHEBI:16567"/>
        <dbReference type="ChEBI" id="CHEBI:18277"/>
        <dbReference type="ChEBI" id="CHEBI:33019"/>
        <dbReference type="ChEBI" id="CHEBI:58017"/>
        <dbReference type="EC" id="2.4.2.18"/>
    </reaction>
</comment>
<comment type="cofactor">
    <cofactor evidence="1">
        <name>Mg(2+)</name>
        <dbReference type="ChEBI" id="CHEBI:18420"/>
    </cofactor>
    <text evidence="1">Binds 2 magnesium ions per monomer.</text>
</comment>
<comment type="pathway">
    <text evidence="1">Amino-acid biosynthesis; L-tryptophan biosynthesis; L-tryptophan from chorismate: step 2/5.</text>
</comment>
<comment type="subunit">
    <text evidence="1">Homodimer.</text>
</comment>
<comment type="similarity">
    <text evidence="1">Belongs to the anthranilate phosphoribosyltransferase family.</text>
</comment>
<feature type="chain" id="PRO_0000227152" description="Anthranilate phosphoribosyltransferase">
    <location>
        <begin position="1"/>
        <end position="340"/>
    </location>
</feature>
<feature type="binding site" evidence="1">
    <location>
        <position position="82"/>
    </location>
    <ligand>
        <name>5-phospho-alpha-D-ribose 1-diphosphate</name>
        <dbReference type="ChEBI" id="CHEBI:58017"/>
    </ligand>
</feature>
<feature type="binding site" evidence="1">
    <location>
        <position position="82"/>
    </location>
    <ligand>
        <name>anthranilate</name>
        <dbReference type="ChEBI" id="CHEBI:16567"/>
        <label>1</label>
    </ligand>
</feature>
<feature type="binding site" evidence="1">
    <location>
        <begin position="85"/>
        <end position="86"/>
    </location>
    <ligand>
        <name>5-phospho-alpha-D-ribose 1-diphosphate</name>
        <dbReference type="ChEBI" id="CHEBI:58017"/>
    </ligand>
</feature>
<feature type="binding site" evidence="1">
    <location>
        <position position="90"/>
    </location>
    <ligand>
        <name>5-phospho-alpha-D-ribose 1-diphosphate</name>
        <dbReference type="ChEBI" id="CHEBI:58017"/>
    </ligand>
</feature>
<feature type="binding site" evidence="1">
    <location>
        <begin position="92"/>
        <end position="95"/>
    </location>
    <ligand>
        <name>5-phospho-alpha-D-ribose 1-diphosphate</name>
        <dbReference type="ChEBI" id="CHEBI:58017"/>
    </ligand>
</feature>
<feature type="binding site" evidence="1">
    <location>
        <position position="94"/>
    </location>
    <ligand>
        <name>Mg(2+)</name>
        <dbReference type="ChEBI" id="CHEBI:18420"/>
        <label>1</label>
    </ligand>
</feature>
<feature type="binding site" evidence="1">
    <location>
        <begin position="110"/>
        <end position="118"/>
    </location>
    <ligand>
        <name>5-phospho-alpha-D-ribose 1-diphosphate</name>
        <dbReference type="ChEBI" id="CHEBI:58017"/>
    </ligand>
</feature>
<feature type="binding site" evidence="1">
    <location>
        <position position="122"/>
    </location>
    <ligand>
        <name>5-phospho-alpha-D-ribose 1-diphosphate</name>
        <dbReference type="ChEBI" id="CHEBI:58017"/>
    </ligand>
</feature>
<feature type="binding site" evidence="1">
    <location>
        <position position="168"/>
    </location>
    <ligand>
        <name>anthranilate</name>
        <dbReference type="ChEBI" id="CHEBI:16567"/>
        <label>2</label>
    </ligand>
</feature>
<feature type="binding site" evidence="1">
    <location>
        <position position="227"/>
    </location>
    <ligand>
        <name>Mg(2+)</name>
        <dbReference type="ChEBI" id="CHEBI:18420"/>
        <label>2</label>
    </ligand>
</feature>
<feature type="binding site" evidence="1">
    <location>
        <position position="228"/>
    </location>
    <ligand>
        <name>Mg(2+)</name>
        <dbReference type="ChEBI" id="CHEBI:18420"/>
        <label>1</label>
    </ligand>
</feature>
<feature type="binding site" evidence="1">
    <location>
        <position position="228"/>
    </location>
    <ligand>
        <name>Mg(2+)</name>
        <dbReference type="ChEBI" id="CHEBI:18420"/>
        <label>2</label>
    </ligand>
</feature>
<organism>
    <name type="scientific">Dechloromonas aromatica (strain RCB)</name>
    <dbReference type="NCBI Taxonomy" id="159087"/>
    <lineage>
        <taxon>Bacteria</taxon>
        <taxon>Pseudomonadati</taxon>
        <taxon>Pseudomonadota</taxon>
        <taxon>Betaproteobacteria</taxon>
        <taxon>Rhodocyclales</taxon>
        <taxon>Azonexaceae</taxon>
        <taxon>Dechloromonas</taxon>
    </lineage>
</organism>
<name>TRPD_DECAR</name>
<keyword id="KW-0028">Amino-acid biosynthesis</keyword>
<keyword id="KW-0057">Aromatic amino acid biosynthesis</keyword>
<keyword id="KW-0328">Glycosyltransferase</keyword>
<keyword id="KW-0460">Magnesium</keyword>
<keyword id="KW-0479">Metal-binding</keyword>
<keyword id="KW-0808">Transferase</keyword>
<keyword id="KW-0822">Tryptophan biosynthesis</keyword>
<proteinExistence type="inferred from homology"/>
<accession>Q47AC6</accession>
<reference key="1">
    <citation type="journal article" date="2009" name="BMC Genomics">
        <title>Metabolic analysis of the soil microbe Dechloromonas aromatica str. RCB: indications of a surprisingly complex life-style and cryptic anaerobic pathways for aromatic degradation.</title>
        <authorList>
            <person name="Salinero K.K."/>
            <person name="Keller K."/>
            <person name="Feil W.S."/>
            <person name="Feil H."/>
            <person name="Trong S."/>
            <person name="Di Bartolo G."/>
            <person name="Lapidus A."/>
        </authorList>
    </citation>
    <scope>NUCLEOTIDE SEQUENCE [LARGE SCALE GENOMIC DNA]</scope>
    <source>
        <strain>RCB</strain>
    </source>
</reference>
<gene>
    <name evidence="1" type="primary">trpD</name>
    <name type="ordered locus">Daro_3476</name>
</gene>